<sequence>MAVSSALCIFSLLVLAQAQSELQQPKIELRLAGDKRKHYEGRLEVFYNNEWGTVCDDDFSIEAAHVACRQLGFLGAVAWSPSAKFGQGEGRIWLDNVHCTGRENSLAACPSNGFGVSDCRHSEDVGVICNQKRIPGHRFINIMNNNVETLEERVEEIRIRPISSHLKRIPITEGYVEVKERGKWRQICDEEWTPLNSRVACGMYGFPGEKNYNNKVYRSLSMRKKKNYWGFSVNCTGNEAHVSSCRLGKALEPKRNGTCGRGLPVVVSCVPGRAFAPSSSIGFRKAYRPEQPLVRLRGGANVGEGRVEVLKNGVWGTVCDDNWNLKAATVVCRELGFGSAKEALTGAKLGQGMGPVHMNEVECSGFEKSLTDCYFNNDALGCSHEEDAAVRCNVPAMGFQKRIRLSGGRNPFEGRVEVLAEKNGSLVWGTVCSENWGIIEAMVVCRQLGLGFASHAFQETWYWAGDANADNVVMSGVRCSGTEMSLPQCLHHGKHINCPKGGGRFAAGVSCSDTAPDLVLNAQLVEQTTYLEDRPMYALQCALEENCLSSTARKNDHSSYRRLLRFSSQIHNVGQSDFRPKLGYHAWTWHECHRHYHSMEVFTHYDLLSLNGTKVAEGHKASFCLEDTHCDEGISKRYHCANFGEQGITVGCWDTYRHDIDCQWIDVTDVKPGDYIFQVVINPNYDVAESDYTNNVMKCKCRYDGYRIWTYSCHIGGSRSSDMDEYSGMSNQLNHLR</sequence>
<protein>
    <recommendedName>
        <fullName>Lysyl oxidase homolog 2A</fullName>
        <ecNumber evidence="4">1.4.3.13</ecNumber>
    </recommendedName>
    <alternativeName>
        <fullName>Lysyl oxidase-like protein 2A</fullName>
    </alternativeName>
</protein>
<comment type="function">
    <text evidence="3 4 7 8">Mediates the post-translational oxidative deamination of lysine residues on target proteins leading to the formation of deaminated lysine (allysine) (By similarity). Acts as a transcription corepressor and specifically mediates deamination of trimethylated 'Lys-4' of histone H3 (H3K4me3), a specific tag for epigenetic transcriptional activation (By similarity). Shows no activity against histone H3 when it is trimethylated on 'Lys-9' (H3K9me3) or 'Lys-27' (H3K27me3) or when 'Lys-4' is monomethylated (H3K4me1) or dimethylated (H3K4me2) (By similarity). Also mediates deamination of methylated TAF10, a member of the transcription factor IID (TFIID) complex, which induces release of TAF10 from promoters, leading to inhibition of TFIID-dependent transcription (By similarity). LOXL2-mediated deamination of TAF10 results in transcriptional repression of genes required for embryonic stem cell pluripotency (By similarity). Involved in epithelial to mesenchymal transition (EMT) and participates in repression of E-cadherin, probably by mediating deamination of histone H3 (By similarity). When secreted into the extracellular matrix, promotes cross-linking of extracellular matrix proteins by mediating oxidative deamination of peptidyl lysine residues in precursors to fibrous collagen and elastin (By similarity). Acts as a regulator of sprouting angiogenesis, probably via collagen IV scaffolding (PubMed:21835952). Acts as a regulator of chondrocyte differentiation, probably by regulating expression of factors that control chondrocyte differentiation (By similarity). Required with loxl2b for correct expression of Sox2 and for neural differentiation (PubMed:25959397).</text>
</comment>
<comment type="catalytic activity">
    <reaction evidence="4">
        <text>L-lysyl-[protein] + O2 + H2O = (S)-2-amino-6-oxohexanoyl-[protein] + H2O2 + NH4(+)</text>
        <dbReference type="Rhea" id="RHEA:24544"/>
        <dbReference type="Rhea" id="RHEA-COMP:9752"/>
        <dbReference type="Rhea" id="RHEA-COMP:12448"/>
        <dbReference type="ChEBI" id="CHEBI:15377"/>
        <dbReference type="ChEBI" id="CHEBI:15379"/>
        <dbReference type="ChEBI" id="CHEBI:16240"/>
        <dbReference type="ChEBI" id="CHEBI:28938"/>
        <dbReference type="ChEBI" id="CHEBI:29969"/>
        <dbReference type="ChEBI" id="CHEBI:131803"/>
        <dbReference type="EC" id="1.4.3.13"/>
    </reaction>
</comment>
<comment type="cofactor">
    <cofactor evidence="4">
        <name>Cu cation</name>
        <dbReference type="ChEBI" id="CHEBI:23378"/>
    </cofactor>
</comment>
<comment type="cofactor">
    <cofactor evidence="4">
        <name>lysine tyrosylquinone residue</name>
        <dbReference type="ChEBI" id="CHEBI:20489"/>
    </cofactor>
    <text evidence="2 4">Contains 1 lysine tyrosylquinone.</text>
</comment>
<comment type="subcellular location">
    <subcellularLocation>
        <location evidence="4">Secreted</location>
        <location evidence="4">Extracellular space</location>
        <location evidence="4">Extracellular matrix</location>
        <location evidence="4">Basement membrane</location>
    </subcellularLocation>
    <subcellularLocation>
        <location evidence="4">Nucleus</location>
    </subcellularLocation>
    <subcellularLocation>
        <location evidence="4">Chromosome</location>
    </subcellularLocation>
    <subcellularLocation>
        <location evidence="4">Endoplasmic reticulum</location>
    </subcellularLocation>
    <text evidence="4">Associated with chromatin. It is unclear how LOXL2 is nuclear as it contains a signal sequence and has been shown to be secreted. However, a number of reports confirm its intracellular location and its key role in transcription regulation.</text>
</comment>
<comment type="developmental stage">
    <text evidence="7 8">Expression increases between 20 and 48 hours after fertilization and is detected in sprouting intersegmental vessels (PubMed:21835952). At 24 hours after fertilization, expressed throughout the embryo with high levels in eye, mesencephalon and hindbrain boundaries (PubMed:25959397).</text>
</comment>
<comment type="PTM">
    <text evidence="4">The lysine tyrosylquinone cross-link (LTQ) is generated by condensation of the epsilon-amino group of a lysine with a topaquinone produced by oxidation of tyrosine.</text>
</comment>
<comment type="disruption phenotype">
    <text evidence="7 8">Morpholino knockdown in the embryo prevents the formation of intersegmental blood vessels (PubMed:21835952). Morpholino knockdown of loxl2a and loxl2b in the embryo results in increased expression of Sox2 in the central nervous system, particularly in the eye, hindbrain and spinal cord (PubMed:25959397). It also leads to impaired neural differentiation with morphological defects in the brain where the anterior brain is rounder than normal and the eyes present a flatter curvature (PubMed:25959397). Embryo development is also compromised (PubMed:25959397).</text>
</comment>
<comment type="similarity">
    <text evidence="9">Belongs to the lysyl oxidase family.</text>
</comment>
<gene>
    <name type="primary">loxl2a</name>
</gene>
<accession>F1QQC3</accession>
<accession>A6MH30</accession>
<name>LOL2A_DANRE</name>
<keyword id="KW-0084">Basement membrane</keyword>
<keyword id="KW-0106">Calcium</keyword>
<keyword id="KW-0156">Chromatin regulator</keyword>
<keyword id="KW-0158">Chromosome</keyword>
<keyword id="KW-0186">Copper</keyword>
<keyword id="KW-1015">Disulfide bond</keyword>
<keyword id="KW-0256">Endoplasmic reticulum</keyword>
<keyword id="KW-0272">Extracellular matrix</keyword>
<keyword id="KW-0325">Glycoprotein</keyword>
<keyword id="KW-0886">LTQ</keyword>
<keyword id="KW-0479">Metal-binding</keyword>
<keyword id="KW-0539">Nucleus</keyword>
<keyword id="KW-0560">Oxidoreductase</keyword>
<keyword id="KW-1185">Reference proteome</keyword>
<keyword id="KW-0677">Repeat</keyword>
<keyword id="KW-0678">Repressor</keyword>
<keyword id="KW-0964">Secreted</keyword>
<keyword id="KW-0732">Signal</keyword>
<keyword id="KW-0801">TPQ</keyword>
<keyword id="KW-0804">Transcription</keyword>
<keyword id="KW-0805">Transcription regulation</keyword>
<reference key="1">
    <citation type="journal article" date="2007" name="Dev. Biol.">
        <title>Essential role of lysyl oxidases in notochord development.</title>
        <authorList>
            <person name="Gansner J.M."/>
            <person name="Mendelsohn B.A."/>
            <person name="Hultman K.A."/>
            <person name="Johnson S.L."/>
            <person name="Gitlin J.D."/>
        </authorList>
    </citation>
    <scope>NUCLEOTIDE SEQUENCE [MRNA]</scope>
</reference>
<reference key="2">
    <citation type="journal article" date="2013" name="Nature">
        <title>The zebrafish reference genome sequence and its relationship to the human genome.</title>
        <authorList>
            <person name="Howe K."/>
            <person name="Clark M.D."/>
            <person name="Torroja C.F."/>
            <person name="Torrance J."/>
            <person name="Berthelot C."/>
            <person name="Muffato M."/>
            <person name="Collins J.E."/>
            <person name="Humphray S."/>
            <person name="McLaren K."/>
            <person name="Matthews L."/>
            <person name="McLaren S."/>
            <person name="Sealy I."/>
            <person name="Caccamo M."/>
            <person name="Churcher C."/>
            <person name="Scott C."/>
            <person name="Barrett J.C."/>
            <person name="Koch R."/>
            <person name="Rauch G.J."/>
            <person name="White S."/>
            <person name="Chow W."/>
            <person name="Kilian B."/>
            <person name="Quintais L.T."/>
            <person name="Guerra-Assuncao J.A."/>
            <person name="Zhou Y."/>
            <person name="Gu Y."/>
            <person name="Yen J."/>
            <person name="Vogel J.H."/>
            <person name="Eyre T."/>
            <person name="Redmond S."/>
            <person name="Banerjee R."/>
            <person name="Chi J."/>
            <person name="Fu B."/>
            <person name="Langley E."/>
            <person name="Maguire S.F."/>
            <person name="Laird G.K."/>
            <person name="Lloyd D."/>
            <person name="Kenyon E."/>
            <person name="Donaldson S."/>
            <person name="Sehra H."/>
            <person name="Almeida-King J."/>
            <person name="Loveland J."/>
            <person name="Trevanion S."/>
            <person name="Jones M."/>
            <person name="Quail M."/>
            <person name="Willey D."/>
            <person name="Hunt A."/>
            <person name="Burton J."/>
            <person name="Sims S."/>
            <person name="McLay K."/>
            <person name="Plumb B."/>
            <person name="Davis J."/>
            <person name="Clee C."/>
            <person name="Oliver K."/>
            <person name="Clark R."/>
            <person name="Riddle C."/>
            <person name="Elliot D."/>
            <person name="Threadgold G."/>
            <person name="Harden G."/>
            <person name="Ware D."/>
            <person name="Begum S."/>
            <person name="Mortimore B."/>
            <person name="Kerry G."/>
            <person name="Heath P."/>
            <person name="Phillimore B."/>
            <person name="Tracey A."/>
            <person name="Corby N."/>
            <person name="Dunn M."/>
            <person name="Johnson C."/>
            <person name="Wood J."/>
            <person name="Clark S."/>
            <person name="Pelan S."/>
            <person name="Griffiths G."/>
            <person name="Smith M."/>
            <person name="Glithero R."/>
            <person name="Howden P."/>
            <person name="Barker N."/>
            <person name="Lloyd C."/>
            <person name="Stevens C."/>
            <person name="Harley J."/>
            <person name="Holt K."/>
            <person name="Panagiotidis G."/>
            <person name="Lovell J."/>
            <person name="Beasley H."/>
            <person name="Henderson C."/>
            <person name="Gordon D."/>
            <person name="Auger K."/>
            <person name="Wright D."/>
            <person name="Collins J."/>
            <person name="Raisen C."/>
            <person name="Dyer L."/>
            <person name="Leung K."/>
            <person name="Robertson L."/>
            <person name="Ambridge K."/>
            <person name="Leongamornlert D."/>
            <person name="McGuire S."/>
            <person name="Gilderthorp R."/>
            <person name="Griffiths C."/>
            <person name="Manthravadi D."/>
            <person name="Nichol S."/>
            <person name="Barker G."/>
            <person name="Whitehead S."/>
            <person name="Kay M."/>
            <person name="Brown J."/>
            <person name="Murnane C."/>
            <person name="Gray E."/>
            <person name="Humphries M."/>
            <person name="Sycamore N."/>
            <person name="Barker D."/>
            <person name="Saunders D."/>
            <person name="Wallis J."/>
            <person name="Babbage A."/>
            <person name="Hammond S."/>
            <person name="Mashreghi-Mohammadi M."/>
            <person name="Barr L."/>
            <person name="Martin S."/>
            <person name="Wray P."/>
            <person name="Ellington A."/>
            <person name="Matthews N."/>
            <person name="Ellwood M."/>
            <person name="Woodmansey R."/>
            <person name="Clark G."/>
            <person name="Cooper J."/>
            <person name="Tromans A."/>
            <person name="Grafham D."/>
            <person name="Skuce C."/>
            <person name="Pandian R."/>
            <person name="Andrews R."/>
            <person name="Harrison E."/>
            <person name="Kimberley A."/>
            <person name="Garnett J."/>
            <person name="Fosker N."/>
            <person name="Hall R."/>
            <person name="Garner P."/>
            <person name="Kelly D."/>
            <person name="Bird C."/>
            <person name="Palmer S."/>
            <person name="Gehring I."/>
            <person name="Berger A."/>
            <person name="Dooley C.M."/>
            <person name="Ersan-Urun Z."/>
            <person name="Eser C."/>
            <person name="Geiger H."/>
            <person name="Geisler M."/>
            <person name="Karotki L."/>
            <person name="Kirn A."/>
            <person name="Konantz J."/>
            <person name="Konantz M."/>
            <person name="Oberlander M."/>
            <person name="Rudolph-Geiger S."/>
            <person name="Teucke M."/>
            <person name="Lanz C."/>
            <person name="Raddatz G."/>
            <person name="Osoegawa K."/>
            <person name="Zhu B."/>
            <person name="Rapp A."/>
            <person name="Widaa S."/>
            <person name="Langford C."/>
            <person name="Yang F."/>
            <person name="Schuster S.C."/>
            <person name="Carter N.P."/>
            <person name="Harrow J."/>
            <person name="Ning Z."/>
            <person name="Herrero J."/>
            <person name="Searle S.M."/>
            <person name="Enright A."/>
            <person name="Geisler R."/>
            <person name="Plasterk R.H."/>
            <person name="Lee C."/>
            <person name="Westerfield M."/>
            <person name="de Jong P.J."/>
            <person name="Zon L.I."/>
            <person name="Postlethwait J.H."/>
            <person name="Nusslein-Volhard C."/>
            <person name="Hubbard T.J."/>
            <person name="Roest Crollius H."/>
            <person name="Rogers J."/>
            <person name="Stemple D.L."/>
        </authorList>
    </citation>
    <scope>NUCLEOTIDE SEQUENCE [LARGE SCALE GENOMIC DNA]</scope>
    <source>
        <strain>Tuebingen</strain>
    </source>
</reference>
<reference key="3">
    <citation type="journal article" date="2011" name="Blood">
        <title>Lysyl oxidase-like protein-2 regulates sprouting angiogenesis and type IV collagen assembly in the endothelial basement membrane.</title>
        <authorList>
            <person name="Bignon M."/>
            <person name="Pichol-Thievend C."/>
            <person name="Hardouin J."/>
            <person name="Malbouyres M."/>
            <person name="Brechot N."/>
            <person name="Nasciutti L."/>
            <person name="Barret A."/>
            <person name="Teillon J."/>
            <person name="Guillon E."/>
            <person name="Etienne E."/>
            <person name="Caron M."/>
            <person name="Joubert-Caron R."/>
            <person name="Monnot C."/>
            <person name="Ruggiero F."/>
            <person name="Muller L."/>
            <person name="Germain S."/>
        </authorList>
    </citation>
    <scope>FUNCTION</scope>
    <scope>DEVELOPMENTAL STAGE</scope>
    <scope>DISRUPTION PHENOTYPE</scope>
</reference>
<reference key="4">
    <citation type="journal article" date="2015" name="Mol. Cell">
        <title>LOXL2 oxidizes methylated TAF10 and controls TFIID-dependent genes during neural progenitor differentiation.</title>
        <authorList>
            <person name="Iturbide A."/>
            <person name="Pascual-Reguant L."/>
            <person name="Fargas L."/>
            <person name="Cebria J.P."/>
            <person name="Alsina B."/>
            <person name="Garcia de Herreros A."/>
            <person name="Peiro S."/>
        </authorList>
    </citation>
    <scope>FUNCTION</scope>
    <scope>DEVELOPMENTAL STAGE</scope>
    <scope>DISRUPTION PHENOTYPE</scope>
</reference>
<evidence type="ECO:0000250" key="1"/>
<evidence type="ECO:0000250" key="2">
    <source>
        <dbReference type="UniProtKB" id="P33072"/>
    </source>
</evidence>
<evidence type="ECO:0000250" key="3">
    <source>
        <dbReference type="UniProtKB" id="P58022"/>
    </source>
</evidence>
<evidence type="ECO:0000250" key="4">
    <source>
        <dbReference type="UniProtKB" id="Q9Y4K0"/>
    </source>
</evidence>
<evidence type="ECO:0000255" key="5"/>
<evidence type="ECO:0000255" key="6">
    <source>
        <dbReference type="PROSITE-ProRule" id="PRU00196"/>
    </source>
</evidence>
<evidence type="ECO:0000269" key="7">
    <source>
    </source>
</evidence>
<evidence type="ECO:0000269" key="8">
    <source>
    </source>
</evidence>
<evidence type="ECO:0000305" key="9"/>
<proteinExistence type="evidence at transcript level"/>
<organism>
    <name type="scientific">Danio rerio</name>
    <name type="common">Zebrafish</name>
    <name type="synonym">Brachydanio rerio</name>
    <dbReference type="NCBI Taxonomy" id="7955"/>
    <lineage>
        <taxon>Eukaryota</taxon>
        <taxon>Metazoa</taxon>
        <taxon>Chordata</taxon>
        <taxon>Craniata</taxon>
        <taxon>Vertebrata</taxon>
        <taxon>Euteleostomi</taxon>
        <taxon>Actinopterygii</taxon>
        <taxon>Neopterygii</taxon>
        <taxon>Teleostei</taxon>
        <taxon>Ostariophysi</taxon>
        <taxon>Cypriniformes</taxon>
        <taxon>Danionidae</taxon>
        <taxon>Danioninae</taxon>
        <taxon>Danio</taxon>
    </lineage>
</organism>
<dbReference type="EC" id="1.4.3.13" evidence="4"/>
<dbReference type="EMBL" id="EF030481">
    <property type="protein sequence ID" value="ABM86967.1"/>
    <property type="molecule type" value="mRNA"/>
</dbReference>
<dbReference type="EMBL" id="BX294119">
    <property type="status" value="NOT_ANNOTATED_CDS"/>
    <property type="molecule type" value="Genomic_DNA"/>
</dbReference>
<dbReference type="RefSeq" id="NP_001092714.1">
    <property type="nucleotide sequence ID" value="NM_001099244.1"/>
</dbReference>
<dbReference type="RefSeq" id="XP_009303525.1">
    <property type="nucleotide sequence ID" value="XM_009305250.4"/>
</dbReference>
<dbReference type="SMR" id="F1QQC3"/>
<dbReference type="FunCoup" id="F1QQC3">
    <property type="interactions" value="30"/>
</dbReference>
<dbReference type="STRING" id="7955.ENSDARP00000064612"/>
<dbReference type="GlyCosmos" id="F1QQC3">
    <property type="glycosylation" value="3 sites, No reported glycans"/>
</dbReference>
<dbReference type="PaxDb" id="7955-ENSDARP00000064612"/>
<dbReference type="Ensembl" id="ENSDART00000064613">
    <property type="protein sequence ID" value="ENSDARP00000064612"/>
    <property type="gene ID" value="ENSDARG00000044010"/>
</dbReference>
<dbReference type="GeneID" id="565508"/>
<dbReference type="KEGG" id="dre:565508"/>
<dbReference type="AGR" id="ZFIN:ZDB-GENE-070818-1"/>
<dbReference type="CTD" id="565508"/>
<dbReference type="ZFIN" id="ZDB-GENE-070818-1">
    <property type="gene designation" value="loxl2a"/>
</dbReference>
<dbReference type="eggNOG" id="ENOG502QSX8">
    <property type="taxonomic scope" value="Eukaryota"/>
</dbReference>
<dbReference type="InParanoid" id="F1QQC3"/>
<dbReference type="OMA" id="VVCPKGG"/>
<dbReference type="OrthoDB" id="547291at2759"/>
<dbReference type="PhylomeDB" id="F1QQC3"/>
<dbReference type="TreeFam" id="TF326061"/>
<dbReference type="BRENDA" id="1.4.3.13">
    <property type="organism ID" value="928"/>
</dbReference>
<dbReference type="PRO" id="PR:F1QQC3"/>
<dbReference type="Proteomes" id="UP000000437">
    <property type="component" value="Chromosome 10"/>
</dbReference>
<dbReference type="Bgee" id="ENSDARG00000044010">
    <property type="expression patterns" value="Expressed in liver and 28 other cell types or tissues"/>
</dbReference>
<dbReference type="ExpressionAtlas" id="F1QQC3">
    <property type="expression patterns" value="baseline and differential"/>
</dbReference>
<dbReference type="GO" id="GO:0005604">
    <property type="term" value="C:basement membrane"/>
    <property type="evidence" value="ECO:0000250"/>
    <property type="project" value="UniProtKB"/>
</dbReference>
<dbReference type="GO" id="GO:0000785">
    <property type="term" value="C:chromatin"/>
    <property type="evidence" value="ECO:0000250"/>
    <property type="project" value="UniProtKB"/>
</dbReference>
<dbReference type="GO" id="GO:0062023">
    <property type="term" value="C:collagen-containing extracellular matrix"/>
    <property type="evidence" value="ECO:0000318"/>
    <property type="project" value="GO_Central"/>
</dbReference>
<dbReference type="GO" id="GO:0005783">
    <property type="term" value="C:endoplasmic reticulum"/>
    <property type="evidence" value="ECO:0000250"/>
    <property type="project" value="UniProtKB"/>
</dbReference>
<dbReference type="GO" id="GO:0005615">
    <property type="term" value="C:extracellular space"/>
    <property type="evidence" value="ECO:0000318"/>
    <property type="project" value="GO_Central"/>
</dbReference>
<dbReference type="GO" id="GO:0016020">
    <property type="term" value="C:membrane"/>
    <property type="evidence" value="ECO:0007669"/>
    <property type="project" value="InterPro"/>
</dbReference>
<dbReference type="GO" id="GO:0005634">
    <property type="term" value="C:nucleus"/>
    <property type="evidence" value="ECO:0000250"/>
    <property type="project" value="UniProtKB"/>
</dbReference>
<dbReference type="GO" id="GO:0005509">
    <property type="term" value="F:calcium ion binding"/>
    <property type="evidence" value="ECO:0000250"/>
    <property type="project" value="UniProtKB"/>
</dbReference>
<dbReference type="GO" id="GO:0005507">
    <property type="term" value="F:copper ion binding"/>
    <property type="evidence" value="ECO:0000250"/>
    <property type="project" value="UniProtKB"/>
</dbReference>
<dbReference type="GO" id="GO:0004720">
    <property type="term" value="F:protein-lysine 6-oxidase activity"/>
    <property type="evidence" value="ECO:0000250"/>
    <property type="project" value="UniProtKB"/>
</dbReference>
<dbReference type="GO" id="GO:0030199">
    <property type="term" value="P:collagen fibril organization"/>
    <property type="evidence" value="ECO:0000250"/>
    <property type="project" value="UniProtKB"/>
</dbReference>
<dbReference type="GO" id="GO:0043542">
    <property type="term" value="P:endothelial cell migration"/>
    <property type="evidence" value="ECO:0000250"/>
    <property type="project" value="UniProtKB"/>
</dbReference>
<dbReference type="GO" id="GO:0001935">
    <property type="term" value="P:endothelial cell proliferation"/>
    <property type="evidence" value="ECO:0000250"/>
    <property type="project" value="UniProtKB"/>
</dbReference>
<dbReference type="GO" id="GO:0001837">
    <property type="term" value="P:epithelial to mesenchymal transition"/>
    <property type="evidence" value="ECO:0000250"/>
    <property type="project" value="UniProtKB"/>
</dbReference>
<dbReference type="GO" id="GO:0070828">
    <property type="term" value="P:heterochromatin organization"/>
    <property type="evidence" value="ECO:0000250"/>
    <property type="project" value="UniProtKB"/>
</dbReference>
<dbReference type="GO" id="GO:0045892">
    <property type="term" value="P:negative regulation of DNA-templated transcription"/>
    <property type="evidence" value="ECO:0000250"/>
    <property type="project" value="UniProtKB"/>
</dbReference>
<dbReference type="GO" id="GO:1902455">
    <property type="term" value="P:negative regulation of stem cell population maintenance"/>
    <property type="evidence" value="ECO:0000250"/>
    <property type="project" value="UniProtKB"/>
</dbReference>
<dbReference type="GO" id="GO:0000122">
    <property type="term" value="P:negative regulation of transcription by RNA polymerase II"/>
    <property type="evidence" value="ECO:0000250"/>
    <property type="project" value="UniProtKB"/>
</dbReference>
<dbReference type="GO" id="GO:0018057">
    <property type="term" value="P:peptidyl-lysine oxidation"/>
    <property type="evidence" value="ECO:0000250"/>
    <property type="project" value="UniProtKB"/>
</dbReference>
<dbReference type="GO" id="GO:0032332">
    <property type="term" value="P:positive regulation of chondrocyte differentiation"/>
    <property type="evidence" value="ECO:0000250"/>
    <property type="project" value="UniProtKB"/>
</dbReference>
<dbReference type="GO" id="GO:0010718">
    <property type="term" value="P:positive regulation of epithelial to mesenchymal transition"/>
    <property type="evidence" value="ECO:0000250"/>
    <property type="project" value="UniProtKB"/>
</dbReference>
<dbReference type="GO" id="GO:0001666">
    <property type="term" value="P:response to hypoxia"/>
    <property type="evidence" value="ECO:0000250"/>
    <property type="project" value="UniProtKB"/>
</dbReference>
<dbReference type="GO" id="GO:0002040">
    <property type="term" value="P:sprouting angiogenesis"/>
    <property type="evidence" value="ECO:0000315"/>
    <property type="project" value="UniProtKB"/>
</dbReference>
<dbReference type="FunFam" id="3.10.250.10:FF:000001">
    <property type="entry name" value="Lysyl oxidase 4 isoform X1"/>
    <property type="match status" value="2"/>
</dbReference>
<dbReference type="FunFam" id="3.10.250.10:FF:000008">
    <property type="entry name" value="Lysyl oxidase homolog 2"/>
    <property type="match status" value="1"/>
</dbReference>
<dbReference type="Gene3D" id="3.10.250.10">
    <property type="entry name" value="SRCR-like domain"/>
    <property type="match status" value="4"/>
</dbReference>
<dbReference type="InterPro" id="IPR050912">
    <property type="entry name" value="LOX-like_protein"/>
</dbReference>
<dbReference type="InterPro" id="IPR001695">
    <property type="entry name" value="Lysyl_oxidase"/>
</dbReference>
<dbReference type="InterPro" id="IPR019828">
    <property type="entry name" value="Lysyl_oxidase_CS"/>
</dbReference>
<dbReference type="InterPro" id="IPR001190">
    <property type="entry name" value="SRCR"/>
</dbReference>
<dbReference type="InterPro" id="IPR036772">
    <property type="entry name" value="SRCR-like_dom_sf"/>
</dbReference>
<dbReference type="PANTHER" id="PTHR45817:SF1">
    <property type="entry name" value="LYSYL OXIDASE HOMOLOG 2"/>
    <property type="match status" value="1"/>
</dbReference>
<dbReference type="PANTHER" id="PTHR45817">
    <property type="entry name" value="LYSYL OXIDASE-LIKE-RELATED"/>
    <property type="match status" value="1"/>
</dbReference>
<dbReference type="Pfam" id="PF01186">
    <property type="entry name" value="Lysyl_oxidase"/>
    <property type="match status" value="1"/>
</dbReference>
<dbReference type="Pfam" id="PF00530">
    <property type="entry name" value="SRCR"/>
    <property type="match status" value="4"/>
</dbReference>
<dbReference type="PRINTS" id="PR00074">
    <property type="entry name" value="LYSYLOXIDASE"/>
</dbReference>
<dbReference type="PRINTS" id="PR00258">
    <property type="entry name" value="SPERACTRCPTR"/>
</dbReference>
<dbReference type="SMART" id="SM00202">
    <property type="entry name" value="SR"/>
    <property type="match status" value="4"/>
</dbReference>
<dbReference type="SUPFAM" id="SSF56487">
    <property type="entry name" value="SRCR-like"/>
    <property type="match status" value="4"/>
</dbReference>
<dbReference type="PROSITE" id="PS00926">
    <property type="entry name" value="LYSYL_OXIDASE"/>
    <property type="match status" value="1"/>
</dbReference>
<dbReference type="PROSITE" id="PS00420">
    <property type="entry name" value="SRCR_1"/>
    <property type="match status" value="1"/>
</dbReference>
<dbReference type="PROSITE" id="PS50287">
    <property type="entry name" value="SRCR_2"/>
    <property type="match status" value="4"/>
</dbReference>
<feature type="signal peptide" evidence="5">
    <location>
        <begin position="1"/>
        <end position="18"/>
    </location>
</feature>
<feature type="chain" id="PRO_0000418004" description="Lysyl oxidase homolog 2A">
    <location>
        <begin position="19"/>
        <end position="737"/>
    </location>
</feature>
<feature type="domain" description="SRCR 1" evidence="6">
    <location>
        <begin position="29"/>
        <end position="130"/>
    </location>
</feature>
<feature type="domain" description="SRCR 2" evidence="6">
    <location>
        <begin position="159"/>
        <end position="270"/>
    </location>
</feature>
<feature type="domain" description="SRCR 3" evidence="6">
    <location>
        <begin position="294"/>
        <end position="393"/>
    </location>
</feature>
<feature type="domain" description="SRCR 4" evidence="6">
    <location>
        <begin position="403"/>
        <end position="512"/>
    </location>
</feature>
<feature type="region of interest" description="Lysyl-oxidase like" evidence="1">
    <location>
        <begin position="516"/>
        <end position="718"/>
    </location>
</feature>
<feature type="binding site" evidence="4">
    <location>
        <position position="517"/>
    </location>
    <ligand>
        <name>Ca(2+)</name>
        <dbReference type="ChEBI" id="CHEBI:29108"/>
    </ligand>
</feature>
<feature type="binding site" evidence="4">
    <location>
        <position position="518"/>
    </location>
    <ligand>
        <name>Ca(2+)</name>
        <dbReference type="ChEBI" id="CHEBI:29108"/>
    </ligand>
</feature>
<feature type="binding site" evidence="4">
    <location>
        <position position="593"/>
    </location>
    <ligand>
        <name>Cu cation</name>
        <dbReference type="ChEBI" id="CHEBI:23378"/>
    </ligand>
</feature>
<feature type="binding site" evidence="4">
    <location>
        <position position="595"/>
    </location>
    <ligand>
        <name>Cu cation</name>
        <dbReference type="ChEBI" id="CHEBI:23378"/>
    </ligand>
</feature>
<feature type="binding site" evidence="4">
    <location>
        <position position="597"/>
    </location>
    <ligand>
        <name>Cu cation</name>
        <dbReference type="ChEBI" id="CHEBI:23378"/>
    </ligand>
</feature>
<feature type="binding site" evidence="4">
    <location>
        <position position="689"/>
    </location>
    <ligand>
        <name>Ca(2+)</name>
        <dbReference type="ChEBI" id="CHEBI:29108"/>
    </ligand>
</feature>
<feature type="binding site" evidence="4">
    <location>
        <position position="691"/>
    </location>
    <ligand>
        <name>Ca(2+)</name>
        <dbReference type="ChEBI" id="CHEBI:29108"/>
    </ligand>
</feature>
<feature type="binding site" evidence="4">
    <location>
        <position position="694"/>
    </location>
    <ligand>
        <name>Ca(2+)</name>
        <dbReference type="ChEBI" id="CHEBI:29108"/>
    </ligand>
</feature>
<feature type="binding site" evidence="4">
    <location>
        <position position="695"/>
    </location>
    <ligand>
        <name>Ca(2+)</name>
        <dbReference type="ChEBI" id="CHEBI:29108"/>
    </ligand>
</feature>
<feature type="modified residue" description="2',4',5'-topaquinone" evidence="2">
    <location>
        <position position="656"/>
    </location>
</feature>
<feature type="glycosylation site" description="N-linked (GlcNAc...) asparagine" evidence="5">
    <location>
        <position position="256"/>
    </location>
</feature>
<feature type="glycosylation site" description="N-linked (GlcNAc...) asparagine" evidence="5">
    <location>
        <position position="423"/>
    </location>
</feature>
<feature type="glycosylation site" description="N-linked (GlcNAc...) asparagine" evidence="5">
    <location>
        <position position="611"/>
    </location>
</feature>
<feature type="disulfide bond" evidence="6">
    <location>
        <begin position="55"/>
        <end position="119"/>
    </location>
</feature>
<feature type="disulfide bond" evidence="6">
    <location>
        <begin position="68"/>
        <end position="129"/>
    </location>
</feature>
<feature type="disulfide bond" evidence="6">
    <location>
        <begin position="99"/>
        <end position="109"/>
    </location>
</feature>
<feature type="disulfide bond" evidence="6">
    <location>
        <begin position="188"/>
        <end position="259"/>
    </location>
</feature>
<feature type="disulfide bond" evidence="6">
    <location>
        <begin position="201"/>
        <end position="269"/>
    </location>
</feature>
<feature type="disulfide bond" evidence="6">
    <location>
        <begin position="235"/>
        <end position="245"/>
    </location>
</feature>
<feature type="disulfide bond" evidence="6">
    <location>
        <begin position="319"/>
        <end position="382"/>
    </location>
</feature>
<feature type="disulfide bond" evidence="6">
    <location>
        <begin position="332"/>
        <end position="392"/>
    </location>
</feature>
<feature type="disulfide bond" evidence="6">
    <location>
        <begin position="363"/>
        <end position="373"/>
    </location>
</feature>
<feature type="disulfide bond" evidence="6">
    <location>
        <begin position="432"/>
        <end position="498"/>
    </location>
</feature>
<feature type="disulfide bond" evidence="6">
    <location>
        <begin position="445"/>
        <end position="511"/>
    </location>
</feature>
<feature type="disulfide bond" evidence="6">
    <location>
        <begin position="479"/>
        <end position="489"/>
    </location>
</feature>
<feature type="disulfide bond" evidence="4">
    <location>
        <begin position="541"/>
        <end position="592"/>
    </location>
</feature>
<feature type="disulfide bond" evidence="4">
    <location>
        <begin position="547"/>
        <end position="662"/>
    </location>
</feature>
<feature type="disulfide bond" evidence="4">
    <location>
        <begin position="624"/>
        <end position="640"/>
    </location>
</feature>
<feature type="disulfide bond" evidence="4">
    <location>
        <begin position="630"/>
        <end position="652"/>
    </location>
</feature>
<feature type="disulfide bond" evidence="6">
    <location>
        <begin position="699"/>
        <end position="713"/>
    </location>
</feature>
<feature type="cross-link" description="Lysine tyrosylquinone (Lys-Tyr)" evidence="2">
    <location>
        <begin position="620"/>
        <end position="656"/>
    </location>
</feature>
<feature type="sequence conflict" description="In Ref. 1; ABM86967." evidence="9" ref="1">
    <original>IFS</original>
    <variation>VFG</variation>
    <location>
        <begin position="9"/>
        <end position="11"/>
    </location>
</feature>
<feature type="sequence conflict" description="In Ref. 1; ABM86967." evidence="9" ref="1">
    <original>A</original>
    <variation>V</variation>
    <location>
        <position position="16"/>
    </location>
</feature>
<feature type="sequence conflict" description="In Ref. 1; ABM86967." evidence="9" ref="1">
    <original>V</original>
    <variation>I</variation>
    <location>
        <position position="147"/>
    </location>
</feature>
<feature type="sequence conflict" description="In Ref. 1; ABM86967." evidence="9" ref="1">
    <original>R</original>
    <variation>W</variation>
    <location>
        <position position="181"/>
    </location>
</feature>
<feature type="sequence conflict" description="In Ref. 1; ABM86967." evidence="9" ref="1">
    <original>A</original>
    <variation>V</variation>
    <location>
        <position position="200"/>
    </location>
</feature>
<feature type="sequence conflict" description="In Ref. 1; ABM86967." evidence="9" ref="1">
    <original>S</original>
    <variation>L</variation>
    <location>
        <position position="232"/>
    </location>
</feature>
<feature type="sequence conflict" description="In Ref. 1; ABM86967." evidence="9" ref="1">
    <original>V</original>
    <variation>M</variation>
    <location>
        <position position="242"/>
    </location>
</feature>